<name>YDFH_ECOL6</name>
<protein>
    <recommendedName>
        <fullName>Uncharacterized HTH-type transcriptional regulator YdfH</fullName>
    </recommendedName>
</protein>
<proteinExistence type="predicted"/>
<feature type="chain" id="PRO_0000050675" description="Uncharacterized HTH-type transcriptional regulator YdfH">
    <location>
        <begin position="1"/>
        <end position="228"/>
    </location>
</feature>
<feature type="domain" description="HTH gntR-type" evidence="1">
    <location>
        <begin position="11"/>
        <end position="78"/>
    </location>
</feature>
<feature type="DNA-binding region" description="H-T-H motif" evidence="1">
    <location>
        <begin position="38"/>
        <end position="57"/>
    </location>
</feature>
<sequence>MTVETQLNPTPPVNQQIYRILRRDIVHCLIAPGTPLSEKEVSVRFNVSRQPVREAFIKLAENGLIQIRPQRGSYVNKISMAQVRNGSFIRQAIECAVARRAASMITESQCYQLEQNLHQQRIAIERKQLDDFFELDDNFHQLLTQIADCQLAWDTIENLKATVDRVRYMSFDHVSPPEMLLRQHLDIFSALQKRDGDAVERAMTQHLQEISESVRQIRQENSDWFSEE</sequence>
<accession>Q8FHD1</accession>
<reference key="1">
    <citation type="journal article" date="2002" name="Proc. Natl. Acad. Sci. U.S.A.">
        <title>Extensive mosaic structure revealed by the complete genome sequence of uropathogenic Escherichia coli.</title>
        <authorList>
            <person name="Welch R.A."/>
            <person name="Burland V."/>
            <person name="Plunkett G. III"/>
            <person name="Redford P."/>
            <person name="Roesch P."/>
            <person name="Rasko D."/>
            <person name="Buckles E.L."/>
            <person name="Liou S.-R."/>
            <person name="Boutin A."/>
            <person name="Hackett J."/>
            <person name="Stroud D."/>
            <person name="Mayhew G.F."/>
            <person name="Rose D.J."/>
            <person name="Zhou S."/>
            <person name="Schwartz D.C."/>
            <person name="Perna N.T."/>
            <person name="Mobley H.L.T."/>
            <person name="Donnenberg M.S."/>
            <person name="Blattner F.R."/>
        </authorList>
    </citation>
    <scope>NUCLEOTIDE SEQUENCE [LARGE SCALE GENOMIC DNA]</scope>
    <source>
        <strain>CFT073 / ATCC 700928 / UPEC</strain>
    </source>
</reference>
<gene>
    <name type="primary">ydfH</name>
    <name type="ordered locus">c1966</name>
</gene>
<evidence type="ECO:0000255" key="1">
    <source>
        <dbReference type="PROSITE-ProRule" id="PRU00307"/>
    </source>
</evidence>
<organism>
    <name type="scientific">Escherichia coli O6:H1 (strain CFT073 / ATCC 700928 / UPEC)</name>
    <dbReference type="NCBI Taxonomy" id="199310"/>
    <lineage>
        <taxon>Bacteria</taxon>
        <taxon>Pseudomonadati</taxon>
        <taxon>Pseudomonadota</taxon>
        <taxon>Gammaproteobacteria</taxon>
        <taxon>Enterobacterales</taxon>
        <taxon>Enterobacteriaceae</taxon>
        <taxon>Escherichia</taxon>
    </lineage>
</organism>
<dbReference type="EMBL" id="AE014075">
    <property type="protein sequence ID" value="AAN80426.1"/>
    <property type="molecule type" value="Genomic_DNA"/>
</dbReference>
<dbReference type="RefSeq" id="WP_000215535.1">
    <property type="nucleotide sequence ID" value="NZ_CP051263.1"/>
</dbReference>
<dbReference type="SMR" id="Q8FHD1"/>
<dbReference type="STRING" id="199310.c1966"/>
<dbReference type="KEGG" id="ecc:c1966"/>
<dbReference type="eggNOG" id="COG1802">
    <property type="taxonomic scope" value="Bacteria"/>
</dbReference>
<dbReference type="HOGENOM" id="CLU_017584_5_2_6"/>
<dbReference type="BioCyc" id="ECOL199310:C1966-MONOMER"/>
<dbReference type="Proteomes" id="UP000001410">
    <property type="component" value="Chromosome"/>
</dbReference>
<dbReference type="GO" id="GO:0003677">
    <property type="term" value="F:DNA binding"/>
    <property type="evidence" value="ECO:0007669"/>
    <property type="project" value="UniProtKB-KW"/>
</dbReference>
<dbReference type="GO" id="GO:0003700">
    <property type="term" value="F:DNA-binding transcription factor activity"/>
    <property type="evidence" value="ECO:0007669"/>
    <property type="project" value="InterPro"/>
</dbReference>
<dbReference type="CDD" id="cd07377">
    <property type="entry name" value="WHTH_GntR"/>
    <property type="match status" value="1"/>
</dbReference>
<dbReference type="FunFam" id="1.10.10.10:FF:000127">
    <property type="entry name" value="GntR family transcriptional regulator"/>
    <property type="match status" value="1"/>
</dbReference>
<dbReference type="FunFam" id="1.20.120.530:FF:000005">
    <property type="entry name" value="Transcriptional regulator, GntR family"/>
    <property type="match status" value="1"/>
</dbReference>
<dbReference type="Gene3D" id="1.20.120.530">
    <property type="entry name" value="GntR ligand-binding domain-like"/>
    <property type="match status" value="1"/>
</dbReference>
<dbReference type="Gene3D" id="1.10.10.10">
    <property type="entry name" value="Winged helix-like DNA-binding domain superfamily/Winged helix DNA-binding domain"/>
    <property type="match status" value="1"/>
</dbReference>
<dbReference type="InterPro" id="IPR011711">
    <property type="entry name" value="GntR_C"/>
</dbReference>
<dbReference type="InterPro" id="IPR008920">
    <property type="entry name" value="TF_FadR/GntR_C"/>
</dbReference>
<dbReference type="InterPro" id="IPR000524">
    <property type="entry name" value="Tscrpt_reg_HTH_GntR"/>
</dbReference>
<dbReference type="InterPro" id="IPR036388">
    <property type="entry name" value="WH-like_DNA-bd_sf"/>
</dbReference>
<dbReference type="InterPro" id="IPR036390">
    <property type="entry name" value="WH_DNA-bd_sf"/>
</dbReference>
<dbReference type="PANTHER" id="PTHR43537:SF6">
    <property type="entry name" value="HTH-TYPE TRANSCRIPTIONAL REPRESSOR RSPR"/>
    <property type="match status" value="1"/>
</dbReference>
<dbReference type="PANTHER" id="PTHR43537">
    <property type="entry name" value="TRANSCRIPTIONAL REGULATOR, GNTR FAMILY"/>
    <property type="match status" value="1"/>
</dbReference>
<dbReference type="Pfam" id="PF07729">
    <property type="entry name" value="FCD"/>
    <property type="match status" value="1"/>
</dbReference>
<dbReference type="Pfam" id="PF00392">
    <property type="entry name" value="GntR"/>
    <property type="match status" value="1"/>
</dbReference>
<dbReference type="PRINTS" id="PR00035">
    <property type="entry name" value="HTHGNTR"/>
</dbReference>
<dbReference type="SMART" id="SM00895">
    <property type="entry name" value="FCD"/>
    <property type="match status" value="1"/>
</dbReference>
<dbReference type="SMART" id="SM00345">
    <property type="entry name" value="HTH_GNTR"/>
    <property type="match status" value="1"/>
</dbReference>
<dbReference type="SUPFAM" id="SSF48008">
    <property type="entry name" value="GntR ligand-binding domain-like"/>
    <property type="match status" value="1"/>
</dbReference>
<dbReference type="SUPFAM" id="SSF46785">
    <property type="entry name" value="Winged helix' DNA-binding domain"/>
    <property type="match status" value="1"/>
</dbReference>
<dbReference type="PROSITE" id="PS50949">
    <property type="entry name" value="HTH_GNTR"/>
    <property type="match status" value="1"/>
</dbReference>
<keyword id="KW-0238">DNA-binding</keyword>
<keyword id="KW-1185">Reference proteome</keyword>
<keyword id="KW-0804">Transcription</keyword>
<keyword id="KW-0805">Transcription regulation</keyword>